<proteinExistence type="evidence at protein level"/>
<name>IOD1_CHICK</name>
<keyword id="KW-1003">Cell membrane</keyword>
<keyword id="KW-0256">Endoplasmic reticulum</keyword>
<keyword id="KW-0472">Membrane</keyword>
<keyword id="KW-0560">Oxidoreductase</keyword>
<keyword id="KW-1185">Reference proteome</keyword>
<keyword id="KW-0712">Selenocysteine</keyword>
<keyword id="KW-0893">Thyroid hormones biosynthesis</keyword>
<keyword id="KW-0812">Transmembrane</keyword>
<keyword id="KW-1133">Transmembrane helix</keyword>
<protein>
    <recommendedName>
        <fullName>Type I iodothyronine deiodinase</fullName>
        <ecNumber evidence="3">1.21.99.3</ecNumber>
        <ecNumber evidence="7">1.21.99.4</ecNumber>
    </recommendedName>
    <alternativeName>
        <fullName>5DI</fullName>
    </alternativeName>
    <alternativeName>
        <fullName>DIOI</fullName>
    </alternativeName>
    <alternativeName>
        <fullName>Type 1 DI</fullName>
    </alternativeName>
    <alternativeName>
        <fullName>Type-I 5'-deiodinase</fullName>
    </alternativeName>
</protein>
<feature type="chain" id="PRO_0000154315" description="Type I iodothyronine deiodinase">
    <location>
        <begin position="1" status="less than"/>
        <end position="245"/>
    </location>
</feature>
<feature type="topological domain" description="Extracellular" evidence="1">
    <location>
        <begin position="1"/>
        <end position="9"/>
    </location>
</feature>
<feature type="transmembrane region" description="Helical; Signal-anchor for type III membrane protein" evidence="5">
    <location>
        <begin position="10"/>
        <end position="30"/>
    </location>
</feature>
<feature type="topological domain" description="Cytoplasmic" evidence="1">
    <location>
        <begin position="31"/>
        <end position="245"/>
    </location>
</feature>
<feature type="active site" evidence="1">
    <location>
        <position position="123"/>
    </location>
</feature>
<feature type="non-standard amino acid" description="Selenocysteine" evidence="1">
    <location>
        <position position="123"/>
    </location>
</feature>
<feature type="non-terminal residue">
    <location>
        <position position="1"/>
    </location>
</feature>
<sequence>LSIRVLLHKLLILLQVTLSVVVGKTMMILFPDTTKRYILKLGEKSRMNQNPKFSYENWGPTFFSFQYLLFVLKVKWRRLEDEAHEGRPAPNTPVVALNGEMQHLFSFMRDNRPLILNFGSCTUPSFMLKFDEFNKLVKDFSSIADFLIIYIEEAHAVDGWAFRNNVVIKNHRSLEDRKTAAQFLQQKNPLCPVVLDTMENLSSSKYAALPERLYILQAGNVIYKGGVGPWNYHPQEIRAVLEKLK</sequence>
<accession>O42411</accession>
<evidence type="ECO:0000250" key="1">
    <source>
        <dbReference type="UniProtKB" id="P24389"/>
    </source>
</evidence>
<evidence type="ECO:0000250" key="2">
    <source>
        <dbReference type="UniProtKB" id="P49895"/>
    </source>
</evidence>
<evidence type="ECO:0000250" key="3">
    <source>
        <dbReference type="UniProtKB" id="Q2QEI3"/>
    </source>
</evidence>
<evidence type="ECO:0000250" key="4">
    <source>
        <dbReference type="UniProtKB" id="Q61153"/>
    </source>
</evidence>
<evidence type="ECO:0000255" key="5"/>
<evidence type="ECO:0000255" key="6">
    <source>
        <dbReference type="PROSITE-ProRule" id="PRU10107"/>
    </source>
</evidence>
<evidence type="ECO:0000269" key="7">
    <source>
    </source>
</evidence>
<evidence type="ECO:0000305" key="8"/>
<evidence type="ECO:0000305" key="9">
    <source>
    </source>
</evidence>
<dbReference type="EC" id="1.21.99.3" evidence="3"/>
<dbReference type="EC" id="1.21.99.4" evidence="7"/>
<dbReference type="EMBL" id="Y11110">
    <property type="protein sequence ID" value="CAA71996.1"/>
    <property type="molecule type" value="mRNA"/>
</dbReference>
<dbReference type="PIR" id="JC5825">
    <property type="entry name" value="JC5825"/>
</dbReference>
<dbReference type="RefSeq" id="NP_001091083.1">
    <property type="nucleotide sequence ID" value="NM_001097614.1"/>
</dbReference>
<dbReference type="FunCoup" id="O42411">
    <property type="interactions" value="7"/>
</dbReference>
<dbReference type="STRING" id="9031.ENSGALP00000017451"/>
<dbReference type="PaxDb" id="9031-ENSGALP00000017451"/>
<dbReference type="GeneID" id="395940"/>
<dbReference type="KEGG" id="gga:395940"/>
<dbReference type="CTD" id="1733"/>
<dbReference type="VEuPathDB" id="HostDB:geneid_395940"/>
<dbReference type="eggNOG" id="ENOG502QUGZ">
    <property type="taxonomic scope" value="Eukaryota"/>
</dbReference>
<dbReference type="InParanoid" id="O42411"/>
<dbReference type="OrthoDB" id="428577at2759"/>
<dbReference type="PhylomeDB" id="O42411"/>
<dbReference type="BRENDA" id="1.21.99.4">
    <property type="organism ID" value="1306"/>
</dbReference>
<dbReference type="SABIO-RK" id="O42411"/>
<dbReference type="PRO" id="PR:O42411"/>
<dbReference type="Proteomes" id="UP000000539">
    <property type="component" value="Unassembled WGS sequence"/>
</dbReference>
<dbReference type="GO" id="GO:0016323">
    <property type="term" value="C:basolateral plasma membrane"/>
    <property type="evidence" value="ECO:0007669"/>
    <property type="project" value="UniProtKB-SubCell"/>
</dbReference>
<dbReference type="GO" id="GO:0005789">
    <property type="term" value="C:endoplasmic reticulum membrane"/>
    <property type="evidence" value="ECO:0007669"/>
    <property type="project" value="UniProtKB-SubCell"/>
</dbReference>
<dbReference type="GO" id="GO:0004800">
    <property type="term" value="F:thyroxine 5'-deiodinase activity"/>
    <property type="evidence" value="ECO:0000314"/>
    <property type="project" value="UniProtKB"/>
</dbReference>
<dbReference type="GO" id="GO:0033798">
    <property type="term" value="F:thyroxine 5-deiodinase activity"/>
    <property type="evidence" value="ECO:0000250"/>
    <property type="project" value="UniProtKB"/>
</dbReference>
<dbReference type="GO" id="GO:0042446">
    <property type="term" value="P:hormone biosynthetic process"/>
    <property type="evidence" value="ECO:0007669"/>
    <property type="project" value="UniProtKB-KW"/>
</dbReference>
<dbReference type="GO" id="GO:0042404">
    <property type="term" value="P:thyroid hormone catabolic process"/>
    <property type="evidence" value="ECO:0000314"/>
    <property type="project" value="UniProtKB"/>
</dbReference>
<dbReference type="GO" id="GO:0042403">
    <property type="term" value="P:thyroid hormone metabolic process"/>
    <property type="evidence" value="ECO:0000318"/>
    <property type="project" value="GO_Central"/>
</dbReference>
<dbReference type="FunFam" id="3.40.30.10:FF:000192">
    <property type="entry name" value="Iodothyronine deiodinase"/>
    <property type="match status" value="1"/>
</dbReference>
<dbReference type="Gene3D" id="3.40.30.10">
    <property type="entry name" value="Glutaredoxin"/>
    <property type="match status" value="1"/>
</dbReference>
<dbReference type="InterPro" id="IPR000643">
    <property type="entry name" value="Iodothyronine_deiodinase"/>
</dbReference>
<dbReference type="InterPro" id="IPR008261">
    <property type="entry name" value="Iodothyronine_deiodinase_AS"/>
</dbReference>
<dbReference type="InterPro" id="IPR036249">
    <property type="entry name" value="Thioredoxin-like_sf"/>
</dbReference>
<dbReference type="PANTHER" id="PTHR11781">
    <property type="entry name" value="IODOTHYRONINE DEIODINASE"/>
    <property type="match status" value="1"/>
</dbReference>
<dbReference type="PANTHER" id="PTHR11781:SF22">
    <property type="entry name" value="TYPE I IODOTHYRONINE DEIODINASE"/>
    <property type="match status" value="1"/>
</dbReference>
<dbReference type="Pfam" id="PF00837">
    <property type="entry name" value="T4_deiodinase"/>
    <property type="match status" value="1"/>
</dbReference>
<dbReference type="PIRSF" id="PIRSF001330">
    <property type="entry name" value="IOD"/>
    <property type="match status" value="1"/>
</dbReference>
<dbReference type="SUPFAM" id="SSF52833">
    <property type="entry name" value="Thioredoxin-like"/>
    <property type="match status" value="1"/>
</dbReference>
<dbReference type="PROSITE" id="PS01205">
    <property type="entry name" value="T4_DEIODINASE"/>
    <property type="match status" value="1"/>
</dbReference>
<gene>
    <name type="primary">DIO1</name>
</gene>
<reference key="1">
    <citation type="journal article" date="1997" name="Endocrinology">
        <title>Expression of chicken hepatic type I and type III iodothyronine deiodinases during embryonic development.</title>
        <authorList>
            <person name="van der Geyten S."/>
            <person name="Sanders J.P."/>
            <person name="Kaptein E."/>
            <person name="Darras V.M."/>
            <person name="Kuehn E.R."/>
            <person name="Leonard J.L."/>
            <person name="Visser T.J."/>
        </authorList>
    </citation>
    <scope>NUCLEOTIDE SEQUENCE [MRNA]</scope>
    <scope>FUNCTION</scope>
    <scope>CATALYTIC ACTIVITY</scope>
    <scope>BIOPHYSICOCHEMICAL PROPERTIES</scope>
    <source>
        <strain>HYBRO</strain>
        <tissue>Liver</tissue>
    </source>
</reference>
<comment type="function">
    <text evidence="1 2 3 4 7">Plays a crucial role in the metabolism of thyroid hormones (TH) and has specific roles in TH activation and inactivation by deiodination (PubMed:9389494). Catalyzes the deiodiantion of L-thyroxine (T4) to 3,5,3'-triiodothyronine (T3) and 3,3',5'-triiodothyronine (rT3) to 3,3'-diiodothyronine (3,3'-T2) via outer-ring deiodination (ORD) (PubMed:9389494). Catalyzes the deiodiantion of T4 to rT3, T3 to 3,3'-T2, 3,5-diiodothyronine (3,5-T2) to 3-monoiodothyronine (3-T1) and 3,3'-T2 to 3-T1 via inner-ring deiodination (IRD) (By similarity). Catalyzes the deiodiantion of 3',5'-diiodothyronine (3',5'-T2) to 3'-monoiodothyronine (3'-T1) via ORD (By similarity). Catalyzes the phenolic ring deiodinations of 3,3',5'-triiodothyronamine, 3',5'-diiodothyronamine and 3,3'-diiodothyronamine as well as tyrosyl ring deiodinations of 3,5,3'-triiodothyronamine and 3,5-diiodothyronamine (By similarity). Catalyzes the deiodination of L-thyroxine sulfate and 3,3',5-triiodo-L-thyronine sulfate via IRD and of 3,3',5'-triiodo-L-thyronine sulfate via ORD (By similarity).</text>
</comment>
<comment type="catalytic activity">
    <reaction evidence="6 7">
        <text>3,3',5-triiodo-L-thyronine + iodide + A + H(+) = L-thyroxine + AH2</text>
        <dbReference type="Rhea" id="RHEA:19745"/>
        <dbReference type="ChEBI" id="CHEBI:13193"/>
        <dbReference type="ChEBI" id="CHEBI:15378"/>
        <dbReference type="ChEBI" id="CHEBI:16382"/>
        <dbReference type="ChEBI" id="CHEBI:17499"/>
        <dbReference type="ChEBI" id="CHEBI:58448"/>
        <dbReference type="ChEBI" id="CHEBI:533015"/>
        <dbReference type="EC" id="1.21.99.4"/>
    </reaction>
    <physiologicalReaction direction="right-to-left" evidence="9">
        <dbReference type="Rhea" id="RHEA:19747"/>
    </physiologicalReaction>
</comment>
<comment type="catalytic activity">
    <reaction evidence="3">
        <text>3,3',5'-triiodo-L-thyronine + iodide + A + H(+) = L-thyroxine + AH2</text>
        <dbReference type="Rhea" id="RHEA:18897"/>
        <dbReference type="ChEBI" id="CHEBI:13193"/>
        <dbReference type="ChEBI" id="CHEBI:15378"/>
        <dbReference type="ChEBI" id="CHEBI:16382"/>
        <dbReference type="ChEBI" id="CHEBI:17499"/>
        <dbReference type="ChEBI" id="CHEBI:57261"/>
        <dbReference type="ChEBI" id="CHEBI:58448"/>
        <dbReference type="EC" id="1.21.99.3"/>
    </reaction>
    <physiologicalReaction direction="right-to-left" evidence="3">
        <dbReference type="Rhea" id="RHEA:18899"/>
    </physiologicalReaction>
</comment>
<comment type="catalytic activity">
    <reaction evidence="7">
        <text>3,3'-diiodo-L-thyronine + iodide + A + H(+) = 3,3',5'-triiodo-L-thyronine + AH2</text>
        <dbReference type="Rhea" id="RHEA:82575"/>
        <dbReference type="ChEBI" id="CHEBI:13193"/>
        <dbReference type="ChEBI" id="CHEBI:15378"/>
        <dbReference type="ChEBI" id="CHEBI:16382"/>
        <dbReference type="ChEBI" id="CHEBI:17499"/>
        <dbReference type="ChEBI" id="CHEBI:57261"/>
        <dbReference type="ChEBI" id="CHEBI:176514"/>
    </reaction>
    <physiologicalReaction direction="right-to-left" evidence="9">
        <dbReference type="Rhea" id="RHEA:82577"/>
    </physiologicalReaction>
</comment>
<comment type="catalytic activity">
    <reaction evidence="3">
        <text>3,3'-diiodo-L-thyronine + iodide + A + H(+) = 3,3',5-triiodo-L-thyronine + AH2</text>
        <dbReference type="Rhea" id="RHEA:82571"/>
        <dbReference type="ChEBI" id="CHEBI:13193"/>
        <dbReference type="ChEBI" id="CHEBI:15378"/>
        <dbReference type="ChEBI" id="CHEBI:16382"/>
        <dbReference type="ChEBI" id="CHEBI:17499"/>
        <dbReference type="ChEBI" id="CHEBI:176514"/>
        <dbReference type="ChEBI" id="CHEBI:533015"/>
    </reaction>
    <physiologicalReaction direction="right-to-left" evidence="3">
        <dbReference type="Rhea" id="RHEA:82573"/>
    </physiologicalReaction>
</comment>
<comment type="catalytic activity">
    <reaction evidence="2">
        <text>3'-iodo-L-thyronine + iodide + A + H(+) = 3',5'-diiodo-L-thyronine + AH2</text>
        <dbReference type="Rhea" id="RHEA:82899"/>
        <dbReference type="ChEBI" id="CHEBI:13193"/>
        <dbReference type="ChEBI" id="CHEBI:15378"/>
        <dbReference type="ChEBI" id="CHEBI:16382"/>
        <dbReference type="ChEBI" id="CHEBI:17499"/>
        <dbReference type="ChEBI" id="CHEBI:195762"/>
        <dbReference type="ChEBI" id="CHEBI:232695"/>
    </reaction>
    <physiologicalReaction direction="right-to-left" evidence="2">
        <dbReference type="Rhea" id="RHEA:82901"/>
    </physiologicalReaction>
</comment>
<comment type="catalytic activity">
    <reaction evidence="4">
        <text>3-iodo-L-thyronine + iodide + A + H(+) = 3,5-diiodo-L-thyronine + AH2</text>
        <dbReference type="Rhea" id="RHEA:82895"/>
        <dbReference type="ChEBI" id="CHEBI:13193"/>
        <dbReference type="ChEBI" id="CHEBI:15378"/>
        <dbReference type="ChEBI" id="CHEBI:16382"/>
        <dbReference type="ChEBI" id="CHEBI:17499"/>
        <dbReference type="ChEBI" id="CHEBI:232626"/>
        <dbReference type="ChEBI" id="CHEBI:232627"/>
    </reaction>
    <physiologicalReaction direction="right-to-left" evidence="4">
        <dbReference type="Rhea" id="RHEA:82897"/>
    </physiologicalReaction>
</comment>
<comment type="catalytic activity">
    <reaction evidence="4">
        <text>3-iodo-L-thyronine + iodide + A + H(+) = 3,3'-diiodo-L-thyronine + AH2</text>
        <dbReference type="Rhea" id="RHEA:83783"/>
        <dbReference type="ChEBI" id="CHEBI:13193"/>
        <dbReference type="ChEBI" id="CHEBI:15378"/>
        <dbReference type="ChEBI" id="CHEBI:16382"/>
        <dbReference type="ChEBI" id="CHEBI:17499"/>
        <dbReference type="ChEBI" id="CHEBI:176514"/>
        <dbReference type="ChEBI" id="CHEBI:232627"/>
    </reaction>
    <physiologicalReaction direction="right-to-left" evidence="4">
        <dbReference type="Rhea" id="RHEA:83785"/>
    </physiologicalReaction>
</comment>
<comment type="catalytic activity">
    <reaction evidence="4">
        <text>3,3'-diiodothyronamine + iodide + A + H(+) = 3,3',5'-triiodothyronamine + AH2</text>
        <dbReference type="Rhea" id="RHEA:83795"/>
        <dbReference type="ChEBI" id="CHEBI:13193"/>
        <dbReference type="ChEBI" id="CHEBI:15378"/>
        <dbReference type="ChEBI" id="CHEBI:16382"/>
        <dbReference type="ChEBI" id="CHEBI:17499"/>
        <dbReference type="ChEBI" id="CHEBI:233341"/>
        <dbReference type="ChEBI" id="CHEBI:233343"/>
    </reaction>
    <physiologicalReaction direction="right-to-left" evidence="4">
        <dbReference type="Rhea" id="RHEA:83797"/>
    </physiologicalReaction>
</comment>
<comment type="catalytic activity">
    <reaction evidence="4">
        <text>3'-iodothyronamine + iodide + A + H(+) = 3',5'-diiodothyronamine + AH2</text>
        <dbReference type="Rhea" id="RHEA:83803"/>
        <dbReference type="ChEBI" id="CHEBI:13193"/>
        <dbReference type="ChEBI" id="CHEBI:15378"/>
        <dbReference type="ChEBI" id="CHEBI:16382"/>
        <dbReference type="ChEBI" id="CHEBI:17499"/>
        <dbReference type="ChEBI" id="CHEBI:233339"/>
        <dbReference type="ChEBI" id="CHEBI:233342"/>
    </reaction>
    <physiologicalReaction direction="right-to-left" evidence="4">
        <dbReference type="Rhea" id="RHEA:83805"/>
    </physiologicalReaction>
</comment>
<comment type="catalytic activity">
    <reaction evidence="4">
        <text>3-iodothyronamine + iodide + A + H(+) = 3,3'-diiodothyronamine + AH2</text>
        <dbReference type="Rhea" id="RHEA:83827"/>
        <dbReference type="ChEBI" id="CHEBI:13193"/>
        <dbReference type="ChEBI" id="CHEBI:15378"/>
        <dbReference type="ChEBI" id="CHEBI:16382"/>
        <dbReference type="ChEBI" id="CHEBI:17499"/>
        <dbReference type="ChEBI" id="CHEBI:231647"/>
        <dbReference type="ChEBI" id="CHEBI:233341"/>
    </reaction>
    <physiologicalReaction direction="right-to-left" evidence="4">
        <dbReference type="Rhea" id="RHEA:83829"/>
    </physiologicalReaction>
</comment>
<comment type="catalytic activity">
    <reaction evidence="4">
        <text>3,3'-diiodothyronamine + iodide + A + H(+) = 3,3',5-triiodothyronamine + AH2</text>
        <dbReference type="Rhea" id="RHEA:83811"/>
        <dbReference type="ChEBI" id="CHEBI:13193"/>
        <dbReference type="ChEBI" id="CHEBI:15378"/>
        <dbReference type="ChEBI" id="CHEBI:16382"/>
        <dbReference type="ChEBI" id="CHEBI:17499"/>
        <dbReference type="ChEBI" id="CHEBI:233341"/>
        <dbReference type="ChEBI" id="CHEBI:233426"/>
    </reaction>
    <physiologicalReaction direction="right-to-left" evidence="4">
        <dbReference type="Rhea" id="RHEA:83813"/>
    </physiologicalReaction>
</comment>
<comment type="catalytic activity">
    <reaction evidence="4">
        <text>3-iodothyronamine + iodide + A + H(+) = 3,5-diiodothyronamine + AH2</text>
        <dbReference type="Rhea" id="RHEA:83823"/>
        <dbReference type="ChEBI" id="CHEBI:13193"/>
        <dbReference type="ChEBI" id="CHEBI:15378"/>
        <dbReference type="ChEBI" id="CHEBI:16382"/>
        <dbReference type="ChEBI" id="CHEBI:17499"/>
        <dbReference type="ChEBI" id="CHEBI:231647"/>
        <dbReference type="ChEBI" id="CHEBI:233340"/>
    </reaction>
    <physiologicalReaction direction="right-to-left" evidence="4">
        <dbReference type="Rhea" id="RHEA:83825"/>
    </physiologicalReaction>
</comment>
<comment type="catalytic activity">
    <reaction evidence="1">
        <text>3,3'-diiodo-L-thyronine sulfate + iodide + A + H(+) = 3,3',5'-triiodo-L-thyronine sulfate + AH2</text>
        <dbReference type="Rhea" id="RHEA:83831"/>
        <dbReference type="ChEBI" id="CHEBI:13193"/>
        <dbReference type="ChEBI" id="CHEBI:15378"/>
        <dbReference type="ChEBI" id="CHEBI:16382"/>
        <dbReference type="ChEBI" id="CHEBI:17499"/>
        <dbReference type="ChEBI" id="CHEBI:176513"/>
        <dbReference type="ChEBI" id="CHEBI:176515"/>
    </reaction>
    <physiologicalReaction direction="right-to-left" evidence="1">
        <dbReference type="Rhea" id="RHEA:83833"/>
    </physiologicalReaction>
</comment>
<comment type="catalytic activity">
    <reaction evidence="1">
        <text>3,3',5'-triiodo-L-thyronine sulfate + iodide + A + H(+) = L-thyroxine sulfate + AH2</text>
        <dbReference type="Rhea" id="RHEA:83835"/>
        <dbReference type="ChEBI" id="CHEBI:13193"/>
        <dbReference type="ChEBI" id="CHEBI:15378"/>
        <dbReference type="ChEBI" id="CHEBI:16382"/>
        <dbReference type="ChEBI" id="CHEBI:17499"/>
        <dbReference type="ChEBI" id="CHEBI:176512"/>
        <dbReference type="ChEBI" id="CHEBI:176513"/>
    </reaction>
    <physiologicalReaction direction="right-to-left" evidence="1">
        <dbReference type="Rhea" id="RHEA:83837"/>
    </physiologicalReaction>
</comment>
<comment type="catalytic activity">
    <reaction evidence="1">
        <text>3,3'-diiodo-L-thyronine sulfate + iodide + A + H(+) = 3,3',5-triiodo-L-thyronine sulfate + AH2</text>
        <dbReference type="Rhea" id="RHEA:83751"/>
        <dbReference type="ChEBI" id="CHEBI:13193"/>
        <dbReference type="ChEBI" id="CHEBI:15378"/>
        <dbReference type="ChEBI" id="CHEBI:16382"/>
        <dbReference type="ChEBI" id="CHEBI:17499"/>
        <dbReference type="ChEBI" id="CHEBI:176511"/>
        <dbReference type="ChEBI" id="CHEBI:176515"/>
    </reaction>
    <physiologicalReaction direction="right-to-left" evidence="1">
        <dbReference type="Rhea" id="RHEA:83753"/>
    </physiologicalReaction>
</comment>
<comment type="biophysicochemical properties">
    <kinetics>
        <KM evidence="7">0.26 uM for 3,3',5'-triiodo-L-thyronine</KM>
    </kinetics>
</comment>
<comment type="subunit">
    <text evidence="2">Predominantly monomer. Can form homodimers but homodimerization is not essential for enzyme activity.</text>
</comment>
<comment type="subcellular location">
    <subcellularLocation>
        <location evidence="1">Cell membrane</location>
        <topology evidence="1">Single-pass type III membrane protein</topology>
    </subcellularLocation>
    <subcellularLocation>
        <location evidence="1">Endoplasmic reticulum membrane</location>
        <topology evidence="1">Single-pass type III membrane protein</topology>
    </subcellularLocation>
    <subcellularLocation>
        <location evidence="1">Basolateral cell membrane</location>
        <topology evidence="1">Single-pass type III membrane protein</topology>
    </subcellularLocation>
</comment>
<comment type="similarity">
    <text evidence="8">Belongs to the iodothyronine deiodinase family.</text>
</comment>
<organism>
    <name type="scientific">Gallus gallus</name>
    <name type="common">Chicken</name>
    <dbReference type="NCBI Taxonomy" id="9031"/>
    <lineage>
        <taxon>Eukaryota</taxon>
        <taxon>Metazoa</taxon>
        <taxon>Chordata</taxon>
        <taxon>Craniata</taxon>
        <taxon>Vertebrata</taxon>
        <taxon>Euteleostomi</taxon>
        <taxon>Archelosauria</taxon>
        <taxon>Archosauria</taxon>
        <taxon>Dinosauria</taxon>
        <taxon>Saurischia</taxon>
        <taxon>Theropoda</taxon>
        <taxon>Coelurosauria</taxon>
        <taxon>Aves</taxon>
        <taxon>Neognathae</taxon>
        <taxon>Galloanserae</taxon>
        <taxon>Galliformes</taxon>
        <taxon>Phasianidae</taxon>
        <taxon>Phasianinae</taxon>
        <taxon>Gallus</taxon>
    </lineage>
</organism>